<keyword id="KW-0963">Cytoplasm</keyword>
<keyword id="KW-0458">Lysosome</keyword>
<keyword id="KW-1185">Reference proteome</keyword>
<accession>Q4PM15</accession>
<comment type="function">
    <text evidence="1">Regulator of the TOR pathway, a signaling cascade that promotes cell growth in response to growth factors, energy levels, and amino acids. As part of the Ragulator complex, may activate the TOR signaling cascade in response to amino acids (By similarity).</text>
</comment>
<comment type="subunit">
    <text evidence="1">Part of the Ragulator complex.</text>
</comment>
<comment type="subcellular location">
    <subcellularLocation>
        <location evidence="1">Cytoplasm</location>
    </subcellularLocation>
    <subcellularLocation>
        <location evidence="1">Lysosome</location>
    </subcellularLocation>
</comment>
<comment type="similarity">
    <text evidence="2">Belongs to the LAMTOR5 family.</text>
</comment>
<sequence length="91" mass="9565">MEAPLVKCLDEILDSGAVGVICADKDGLALHSAGQVQLRAAGVITALASLAKQIDPSCDTTPTIHLESDSLDVYIQQKEQVSLAVYSTPKK</sequence>
<organism>
    <name type="scientific">Ixodes scapularis</name>
    <name type="common">Black-legged tick</name>
    <name type="synonym">Deer tick</name>
    <dbReference type="NCBI Taxonomy" id="6945"/>
    <lineage>
        <taxon>Eukaryota</taxon>
        <taxon>Metazoa</taxon>
        <taxon>Ecdysozoa</taxon>
        <taxon>Arthropoda</taxon>
        <taxon>Chelicerata</taxon>
        <taxon>Arachnida</taxon>
        <taxon>Acari</taxon>
        <taxon>Parasitiformes</taxon>
        <taxon>Ixodida</taxon>
        <taxon>Ixodoidea</taxon>
        <taxon>Ixodidae</taxon>
        <taxon>Ixodinae</taxon>
        <taxon>Ixodes</taxon>
    </lineage>
</organism>
<protein>
    <recommendedName>
        <fullName>Ragulator complex protein LAMTOR5 homolog</fullName>
    </recommendedName>
    <alternativeName>
        <fullName>Late endosomal/lysosomal adaptor and MAPK and MTOR activator 5</fullName>
    </alternativeName>
</protein>
<reference key="1">
    <citation type="journal article" date="2006" name="Insect Biochem. Mol. Biol.">
        <title>An annotated catalog of salivary gland transcripts from Ixodes scapularis ticks.</title>
        <authorList>
            <person name="Ribeiro J.M.C."/>
            <person name="Alarcon-Chaidez F."/>
            <person name="Francischetti I.M.B."/>
            <person name="Mans B.J."/>
            <person name="Mather T.N."/>
            <person name="Valenzuela J.G."/>
            <person name="Wikel S.K."/>
        </authorList>
    </citation>
    <scope>NUCLEOTIDE SEQUENCE [LARGE SCALE MRNA]</scope>
    <source>
        <strain>IS-6-12L-315</strain>
        <tissue>Salivary gland</tissue>
    </source>
</reference>
<proteinExistence type="inferred from homology"/>
<evidence type="ECO:0000250" key="1"/>
<evidence type="ECO:0000305" key="2"/>
<dbReference type="EMBL" id="DQ066313">
    <property type="protein sequence ID" value="AAY66950.1"/>
    <property type="molecule type" value="mRNA"/>
</dbReference>
<dbReference type="SMR" id="Q4PM15"/>
<dbReference type="VEuPathDB" id="VectorBase:ISCI006790"/>
<dbReference type="VEuPathDB" id="VectorBase:ISCP_031292"/>
<dbReference type="VEuPathDB" id="VectorBase:ISCW006790"/>
<dbReference type="InParanoid" id="Q4PM15"/>
<dbReference type="OrthoDB" id="76862at2759"/>
<dbReference type="Proteomes" id="UP000001555">
    <property type="component" value="Unplaced"/>
</dbReference>
<dbReference type="GO" id="GO:0005764">
    <property type="term" value="C:lysosome"/>
    <property type="evidence" value="ECO:0000250"/>
    <property type="project" value="UniProtKB"/>
</dbReference>
<dbReference type="GO" id="GO:0071986">
    <property type="term" value="C:Ragulator complex"/>
    <property type="evidence" value="ECO:0000250"/>
    <property type="project" value="UniProtKB"/>
</dbReference>
<dbReference type="GO" id="GO:0071230">
    <property type="term" value="P:cellular response to amino acid stimulus"/>
    <property type="evidence" value="ECO:0000250"/>
    <property type="project" value="UniProtKB"/>
</dbReference>
<dbReference type="GO" id="GO:0043066">
    <property type="term" value="P:negative regulation of apoptotic process"/>
    <property type="evidence" value="ECO:0007669"/>
    <property type="project" value="InterPro"/>
</dbReference>
<dbReference type="GO" id="GO:0032008">
    <property type="term" value="P:positive regulation of TOR signaling"/>
    <property type="evidence" value="ECO:0000250"/>
    <property type="project" value="UniProtKB"/>
</dbReference>
<dbReference type="GO" id="GO:0061462">
    <property type="term" value="P:protein localization to lysosome"/>
    <property type="evidence" value="ECO:0000250"/>
    <property type="project" value="UniProtKB"/>
</dbReference>
<dbReference type="GO" id="GO:0008361">
    <property type="term" value="P:regulation of cell size"/>
    <property type="evidence" value="ECO:0000250"/>
    <property type="project" value="UniProtKB"/>
</dbReference>
<dbReference type="FunFam" id="3.30.450.30:FF:000005">
    <property type="entry name" value="Ragulator complex protein LAMTOR5 homolog"/>
    <property type="match status" value="1"/>
</dbReference>
<dbReference type="Gene3D" id="3.30.450.30">
    <property type="entry name" value="Dynein light chain 2a, cytoplasmic"/>
    <property type="match status" value="1"/>
</dbReference>
<dbReference type="InterPro" id="IPR024135">
    <property type="entry name" value="LAMTOR5"/>
</dbReference>
<dbReference type="PANTHER" id="PTHR13342">
    <property type="entry name" value="RAGULATOR COMPLEX PROTEIN LAMTOR5"/>
    <property type="match status" value="1"/>
</dbReference>
<dbReference type="PANTHER" id="PTHR13342:SF2">
    <property type="entry name" value="RAGULATOR COMPLEX PROTEIN LAMTOR5"/>
    <property type="match status" value="1"/>
</dbReference>
<dbReference type="Pfam" id="PF16672">
    <property type="entry name" value="LAMTOR5"/>
    <property type="match status" value="1"/>
</dbReference>
<feature type="chain" id="PRO_0000331598" description="Ragulator complex protein LAMTOR5 homolog">
    <location>
        <begin position="1"/>
        <end position="91"/>
    </location>
</feature>
<name>LTOR5_IXOSC</name>